<sequence>MRYLVTLLLSLAVLVTAGCGWHLRSTTQVPASMKTMILDSGDPNGPLSRAVRNQLRLNNVNLLDKDTTRKDVPSLRLGTVTISQDTASVFQDGQTAEYQMVMTVNASVLIPGHDIYPISTKVYRSFFDNPQMALAKDNEQAMIVQEMYDKAAEQLIRKLTSVRAADIQATKEEATADNETAAPASTPARVSTTLSN</sequence>
<organism>
    <name type="scientific">Salmonella choleraesuis (strain SC-B67)</name>
    <dbReference type="NCBI Taxonomy" id="321314"/>
    <lineage>
        <taxon>Bacteria</taxon>
        <taxon>Pseudomonadati</taxon>
        <taxon>Pseudomonadota</taxon>
        <taxon>Gammaproteobacteria</taxon>
        <taxon>Enterobacterales</taxon>
        <taxon>Enterobacteriaceae</taxon>
        <taxon>Salmonella</taxon>
    </lineage>
</organism>
<feature type="signal peptide" evidence="1">
    <location>
        <begin position="1"/>
        <end position="18"/>
    </location>
</feature>
<feature type="chain" id="PRO_0000281181" description="LPS-assembly lipoprotein LptE">
    <location>
        <begin position="19"/>
        <end position="196"/>
    </location>
</feature>
<feature type="region of interest" description="Disordered" evidence="2">
    <location>
        <begin position="171"/>
        <end position="196"/>
    </location>
</feature>
<feature type="lipid moiety-binding region" description="N-palmitoyl cysteine" evidence="1">
    <location>
        <position position="19"/>
    </location>
</feature>
<feature type="lipid moiety-binding region" description="S-diacylglycerol cysteine" evidence="1">
    <location>
        <position position="19"/>
    </location>
</feature>
<proteinExistence type="inferred from homology"/>
<evidence type="ECO:0000255" key="1">
    <source>
        <dbReference type="HAMAP-Rule" id="MF_01186"/>
    </source>
</evidence>
<evidence type="ECO:0000256" key="2">
    <source>
        <dbReference type="SAM" id="MobiDB-lite"/>
    </source>
</evidence>
<keyword id="KW-0998">Cell outer membrane</keyword>
<keyword id="KW-0449">Lipoprotein</keyword>
<keyword id="KW-0472">Membrane</keyword>
<keyword id="KW-0564">Palmitate</keyword>
<keyword id="KW-0732">Signal</keyword>
<name>LPTE_SALCH</name>
<accession>Q57RS8</accession>
<reference key="1">
    <citation type="journal article" date="2005" name="Nucleic Acids Res.">
        <title>The genome sequence of Salmonella enterica serovar Choleraesuis, a highly invasive and resistant zoonotic pathogen.</title>
        <authorList>
            <person name="Chiu C.-H."/>
            <person name="Tang P."/>
            <person name="Chu C."/>
            <person name="Hu S."/>
            <person name="Bao Q."/>
            <person name="Yu J."/>
            <person name="Chou Y.-Y."/>
            <person name="Wang H.-S."/>
            <person name="Lee Y.-S."/>
        </authorList>
    </citation>
    <scope>NUCLEOTIDE SEQUENCE [LARGE SCALE GENOMIC DNA]</scope>
    <source>
        <strain>SC-B67</strain>
    </source>
</reference>
<gene>
    <name evidence="1" type="primary">lptE</name>
    <name type="synonym">rlpB</name>
    <name type="ordered locus">SCH_0677</name>
</gene>
<protein>
    <recommendedName>
        <fullName evidence="1">LPS-assembly lipoprotein LptE</fullName>
    </recommendedName>
</protein>
<comment type="function">
    <text evidence="1">Together with LptD, is involved in the assembly of lipopolysaccharide (LPS) at the surface of the outer membrane. Required for the proper assembly of LptD. Binds LPS and may serve as the LPS recognition site at the outer membrane.</text>
</comment>
<comment type="subunit">
    <text evidence="1">Component of the lipopolysaccharide transport and assembly complex. Interacts with LptD.</text>
</comment>
<comment type="subcellular location">
    <subcellularLocation>
        <location evidence="1">Cell outer membrane</location>
        <topology evidence="1">Lipid-anchor</topology>
    </subcellularLocation>
</comment>
<comment type="similarity">
    <text evidence="1">Belongs to the LptE lipoprotein family.</text>
</comment>
<dbReference type="EMBL" id="AE017220">
    <property type="protein sequence ID" value="AAX64583.1"/>
    <property type="molecule type" value="Genomic_DNA"/>
</dbReference>
<dbReference type="RefSeq" id="WP_001269950.1">
    <property type="nucleotide sequence ID" value="NC_006905.1"/>
</dbReference>
<dbReference type="SMR" id="Q57RS8"/>
<dbReference type="KEGG" id="sec:SCH_0677"/>
<dbReference type="HOGENOM" id="CLU_103309_1_1_6"/>
<dbReference type="Proteomes" id="UP000000538">
    <property type="component" value="Chromosome"/>
</dbReference>
<dbReference type="GO" id="GO:0009279">
    <property type="term" value="C:cell outer membrane"/>
    <property type="evidence" value="ECO:0007669"/>
    <property type="project" value="UniProtKB-SubCell"/>
</dbReference>
<dbReference type="GO" id="GO:1990351">
    <property type="term" value="C:transporter complex"/>
    <property type="evidence" value="ECO:0007669"/>
    <property type="project" value="TreeGrafter"/>
</dbReference>
<dbReference type="GO" id="GO:0001530">
    <property type="term" value="F:lipopolysaccharide binding"/>
    <property type="evidence" value="ECO:0007669"/>
    <property type="project" value="TreeGrafter"/>
</dbReference>
<dbReference type="GO" id="GO:0043165">
    <property type="term" value="P:Gram-negative-bacterium-type cell outer membrane assembly"/>
    <property type="evidence" value="ECO:0007669"/>
    <property type="project" value="UniProtKB-UniRule"/>
</dbReference>
<dbReference type="GO" id="GO:0015920">
    <property type="term" value="P:lipopolysaccharide transport"/>
    <property type="evidence" value="ECO:0007669"/>
    <property type="project" value="TreeGrafter"/>
</dbReference>
<dbReference type="FunFam" id="3.30.160.150:FF:000001">
    <property type="entry name" value="LPS-assembly lipoprotein LptE"/>
    <property type="match status" value="1"/>
</dbReference>
<dbReference type="Gene3D" id="3.30.160.150">
    <property type="entry name" value="Lipoprotein like domain"/>
    <property type="match status" value="1"/>
</dbReference>
<dbReference type="HAMAP" id="MF_01186">
    <property type="entry name" value="LPS_assembly_LptE"/>
    <property type="match status" value="1"/>
</dbReference>
<dbReference type="InterPro" id="IPR007485">
    <property type="entry name" value="LPS_assembly_LptE"/>
</dbReference>
<dbReference type="NCBIfam" id="NF008062">
    <property type="entry name" value="PRK10796.1"/>
    <property type="match status" value="1"/>
</dbReference>
<dbReference type="PANTHER" id="PTHR38098">
    <property type="entry name" value="LPS-ASSEMBLY LIPOPROTEIN LPTE"/>
    <property type="match status" value="1"/>
</dbReference>
<dbReference type="PANTHER" id="PTHR38098:SF1">
    <property type="entry name" value="LPS-ASSEMBLY LIPOPROTEIN LPTE"/>
    <property type="match status" value="1"/>
</dbReference>
<dbReference type="Pfam" id="PF04390">
    <property type="entry name" value="LptE"/>
    <property type="match status" value="1"/>
</dbReference>
<dbReference type="PROSITE" id="PS51257">
    <property type="entry name" value="PROKAR_LIPOPROTEIN"/>
    <property type="match status" value="1"/>
</dbReference>